<gene>
    <name type="primary">kdkA</name>
    <name type="ordered locus">VC_0227</name>
</gene>
<organism>
    <name type="scientific">Vibrio cholerae serotype O1 (strain ATCC 39315 / El Tor Inaba N16961)</name>
    <dbReference type="NCBI Taxonomy" id="243277"/>
    <lineage>
        <taxon>Bacteria</taxon>
        <taxon>Pseudomonadati</taxon>
        <taxon>Pseudomonadota</taxon>
        <taxon>Gammaproteobacteria</taxon>
        <taxon>Vibrionales</taxon>
        <taxon>Vibrionaceae</taxon>
        <taxon>Vibrio</taxon>
    </lineage>
</organism>
<proteinExistence type="inferred from homology"/>
<evidence type="ECO:0000250" key="1"/>
<evidence type="ECO:0000255" key="2"/>
<evidence type="ECO:0000305" key="3"/>
<sequence length="235" mass="27408">MIQTFNDAQQKVWFDDALLHEDPSQCCNPEFWQQNGKVLGSATGRGTTWFVQLQQTQGALRHYRRGGLFGKLVADSYWFTGWEKTRSYQEFMLLNHLRDAGVNVPRPIAARVQKHGLLYKADLLSEKVPNARDLVSILQESPISDELYRKIGREIRKMHDAQVNHTDLNIHNILIDDQEKVWIIDFDKCYVQIGDSWKQGNLKRLKRSFEKEVCKRGINWSLEAFAIISSYKHEE</sequence>
<keyword id="KW-0067">ATP-binding</keyword>
<keyword id="KW-0997">Cell inner membrane</keyword>
<keyword id="KW-1003">Cell membrane</keyword>
<keyword id="KW-0418">Kinase</keyword>
<keyword id="KW-0448">Lipopolysaccharide biosynthesis</keyword>
<keyword id="KW-0472">Membrane</keyword>
<keyword id="KW-0547">Nucleotide-binding</keyword>
<keyword id="KW-1185">Reference proteome</keyword>
<keyword id="KW-0808">Transferase</keyword>
<comment type="function">
    <text evidence="1">Catalyzes the ATP-dependent phosphorylation of the 3-deoxy-D-manno-octulosonic acid (Kdo) residue in Kdo-lipid IV(A) at the 4-OH position.</text>
</comment>
<comment type="catalytic activity">
    <reaction>
        <text>an alpha-Kdo-(2-&gt;6)-lipid IVA + ATP = a 4-O-phospho-alpha-Kdo-(2-&gt;6)-lipid IVA + ADP + H(+)</text>
        <dbReference type="Rhea" id="RHEA:74271"/>
        <dbReference type="ChEBI" id="CHEBI:15378"/>
        <dbReference type="ChEBI" id="CHEBI:30616"/>
        <dbReference type="ChEBI" id="CHEBI:176428"/>
        <dbReference type="ChEBI" id="CHEBI:193140"/>
        <dbReference type="ChEBI" id="CHEBI:456216"/>
        <dbReference type="EC" id="2.7.1.166"/>
    </reaction>
</comment>
<comment type="pathway">
    <text>Bacterial outer membrane biogenesis; LPS core biosynthesis.</text>
</comment>
<comment type="subcellular location">
    <subcellularLocation>
        <location evidence="1">Cell inner membrane</location>
        <topology evidence="1">Peripheral membrane protein</topology>
        <orientation evidence="1">Cytoplasmic side</orientation>
    </subcellularLocation>
</comment>
<comment type="similarity">
    <text evidence="3">Belongs to the protein kinase superfamily. KdkA/RfaP family.</text>
</comment>
<comment type="sequence caution" evidence="3">
    <conflict type="erroneous initiation">
        <sequence resource="EMBL-CDS" id="AAF93403"/>
    </conflict>
</comment>
<accession>Q9KVB9</accession>
<dbReference type="EC" id="2.7.1.166"/>
<dbReference type="EMBL" id="AE003852">
    <property type="protein sequence ID" value="AAF93403.1"/>
    <property type="status" value="ALT_INIT"/>
    <property type="molecule type" value="Genomic_DNA"/>
</dbReference>
<dbReference type="PIR" id="E82348">
    <property type="entry name" value="E82348"/>
</dbReference>
<dbReference type="RefSeq" id="NP_229884.1">
    <property type="nucleotide sequence ID" value="NC_002505.1"/>
</dbReference>
<dbReference type="RefSeq" id="WP_000616620.1">
    <property type="nucleotide sequence ID" value="NZ_LT906614.1"/>
</dbReference>
<dbReference type="SMR" id="Q9KVB9"/>
<dbReference type="STRING" id="243277.VC_0227"/>
<dbReference type="DNASU" id="2614177"/>
<dbReference type="EnsemblBacteria" id="AAF93403">
    <property type="protein sequence ID" value="AAF93403"/>
    <property type="gene ID" value="VC_0227"/>
</dbReference>
<dbReference type="KEGG" id="vch:VC_0227"/>
<dbReference type="PATRIC" id="fig|243277.26.peg.208"/>
<dbReference type="eggNOG" id="COG3642">
    <property type="taxonomic scope" value="Bacteria"/>
</dbReference>
<dbReference type="HOGENOM" id="CLU_094226_0_0_6"/>
<dbReference type="BioCyc" id="MetaCyc:FY484_RS01200-MONOMER"/>
<dbReference type="UniPathway" id="UPA00958"/>
<dbReference type="Proteomes" id="UP000000584">
    <property type="component" value="Chromosome 1"/>
</dbReference>
<dbReference type="GO" id="GO:0005886">
    <property type="term" value="C:plasma membrane"/>
    <property type="evidence" value="ECO:0007669"/>
    <property type="project" value="UniProtKB-SubCell"/>
</dbReference>
<dbReference type="GO" id="GO:0005524">
    <property type="term" value="F:ATP binding"/>
    <property type="evidence" value="ECO:0007669"/>
    <property type="project" value="UniProtKB-UniRule"/>
</dbReference>
<dbReference type="GO" id="GO:0004672">
    <property type="term" value="F:protein kinase activity"/>
    <property type="evidence" value="ECO:0007669"/>
    <property type="project" value="InterPro"/>
</dbReference>
<dbReference type="GO" id="GO:0009244">
    <property type="term" value="P:lipopolysaccharide core region biosynthetic process"/>
    <property type="evidence" value="ECO:0007669"/>
    <property type="project" value="UniProtKB-UniRule"/>
</dbReference>
<dbReference type="Gene3D" id="1.10.510.10">
    <property type="entry name" value="Transferase(Phosphotransferase) domain 1"/>
    <property type="match status" value="1"/>
</dbReference>
<dbReference type="HAMAP" id="MF_00521">
    <property type="entry name" value="KDO_kinase"/>
    <property type="match status" value="1"/>
</dbReference>
<dbReference type="InterPro" id="IPR022826">
    <property type="entry name" value="KDO_kinase"/>
</dbReference>
<dbReference type="InterPro" id="IPR011009">
    <property type="entry name" value="Kinase-like_dom_sf"/>
</dbReference>
<dbReference type="InterPro" id="IPR000719">
    <property type="entry name" value="Prot_kinase_dom"/>
</dbReference>
<dbReference type="NCBIfam" id="NF002475">
    <property type="entry name" value="PRK01723.1"/>
    <property type="match status" value="1"/>
</dbReference>
<dbReference type="Pfam" id="PF06293">
    <property type="entry name" value="Kdo"/>
    <property type="match status" value="1"/>
</dbReference>
<dbReference type="SUPFAM" id="SSF56112">
    <property type="entry name" value="Protein kinase-like (PK-like)"/>
    <property type="match status" value="1"/>
</dbReference>
<feature type="chain" id="PRO_0000194316" description="3-deoxy-D-manno-octulosonic acid kinase">
    <location>
        <begin position="1"/>
        <end position="235"/>
    </location>
</feature>
<feature type="active site" evidence="2">
    <location>
        <position position="167"/>
    </location>
</feature>
<name>KDKA_VIBCH</name>
<protein>
    <recommendedName>
        <fullName>3-deoxy-D-manno-octulosonic acid kinase</fullName>
        <shortName>Kdo kinase</shortName>
        <ecNumber>2.7.1.166</ecNumber>
    </recommendedName>
</protein>
<reference key="1">
    <citation type="journal article" date="2000" name="Nature">
        <title>DNA sequence of both chromosomes of the cholera pathogen Vibrio cholerae.</title>
        <authorList>
            <person name="Heidelberg J.F."/>
            <person name="Eisen J.A."/>
            <person name="Nelson W.C."/>
            <person name="Clayton R.A."/>
            <person name="Gwinn M.L."/>
            <person name="Dodson R.J."/>
            <person name="Haft D.H."/>
            <person name="Hickey E.K."/>
            <person name="Peterson J.D."/>
            <person name="Umayam L.A."/>
            <person name="Gill S.R."/>
            <person name="Nelson K.E."/>
            <person name="Read T.D."/>
            <person name="Tettelin H."/>
            <person name="Richardson D.L."/>
            <person name="Ermolaeva M.D."/>
            <person name="Vamathevan J.J."/>
            <person name="Bass S."/>
            <person name="Qin H."/>
            <person name="Dragoi I."/>
            <person name="Sellers P."/>
            <person name="McDonald L.A."/>
            <person name="Utterback T.R."/>
            <person name="Fleischmann R.D."/>
            <person name="Nierman W.C."/>
            <person name="White O."/>
            <person name="Salzberg S.L."/>
            <person name="Smith H.O."/>
            <person name="Colwell R.R."/>
            <person name="Mekalanos J.J."/>
            <person name="Venter J.C."/>
            <person name="Fraser C.M."/>
        </authorList>
    </citation>
    <scope>NUCLEOTIDE SEQUENCE [LARGE SCALE GENOMIC DNA]</scope>
    <source>
        <strain>ATCC 39315 / El Tor Inaba N16961</strain>
    </source>
</reference>